<dbReference type="EMBL" id="AE017224">
    <property type="protein sequence ID" value="AAX76497.1"/>
    <property type="molecule type" value="Genomic_DNA"/>
</dbReference>
<dbReference type="RefSeq" id="WP_002966591.1">
    <property type="nucleotide sequence ID" value="NC_006933.1"/>
</dbReference>
<dbReference type="SMR" id="Q576D7"/>
<dbReference type="EnsemblBacteria" id="AAX76497">
    <property type="protein sequence ID" value="AAX76497"/>
    <property type="gene ID" value="BruAb2_1126"/>
</dbReference>
<dbReference type="KEGG" id="bmb:BruAb2_1126"/>
<dbReference type="HOGENOM" id="CLU_008287_19_4_5"/>
<dbReference type="Proteomes" id="UP000000540">
    <property type="component" value="Chromosome II"/>
</dbReference>
<dbReference type="GO" id="GO:0009279">
    <property type="term" value="C:cell outer membrane"/>
    <property type="evidence" value="ECO:0007669"/>
    <property type="project" value="UniProtKB-SubCell"/>
</dbReference>
<dbReference type="GO" id="GO:0015344">
    <property type="term" value="F:siderophore uptake transmembrane transporter activity"/>
    <property type="evidence" value="ECO:0007669"/>
    <property type="project" value="TreeGrafter"/>
</dbReference>
<dbReference type="CDD" id="cd01347">
    <property type="entry name" value="ligand_gated_channel"/>
    <property type="match status" value="1"/>
</dbReference>
<dbReference type="Gene3D" id="2.40.170.20">
    <property type="entry name" value="TonB-dependent receptor, beta-barrel domain"/>
    <property type="match status" value="1"/>
</dbReference>
<dbReference type="Gene3D" id="2.170.130.10">
    <property type="entry name" value="TonB-dependent receptor, plug domain"/>
    <property type="match status" value="1"/>
</dbReference>
<dbReference type="InterPro" id="IPR012910">
    <property type="entry name" value="Plug_dom"/>
</dbReference>
<dbReference type="InterPro" id="IPR037066">
    <property type="entry name" value="Plug_dom_sf"/>
</dbReference>
<dbReference type="InterPro" id="IPR039426">
    <property type="entry name" value="TonB-dep_rcpt-like"/>
</dbReference>
<dbReference type="InterPro" id="IPR000531">
    <property type="entry name" value="TonB-dep_rcpt_b-brl"/>
</dbReference>
<dbReference type="InterPro" id="IPR036942">
    <property type="entry name" value="TonB_rcpt_b-brl_sf"/>
</dbReference>
<dbReference type="PANTHER" id="PTHR30069:SF41">
    <property type="entry name" value="HEME_HEMOPEXIN UTILIZATION PROTEIN C"/>
    <property type="match status" value="1"/>
</dbReference>
<dbReference type="PANTHER" id="PTHR30069">
    <property type="entry name" value="TONB-DEPENDENT OUTER MEMBRANE RECEPTOR"/>
    <property type="match status" value="1"/>
</dbReference>
<dbReference type="Pfam" id="PF07715">
    <property type="entry name" value="Plug"/>
    <property type="match status" value="1"/>
</dbReference>
<dbReference type="Pfam" id="PF00593">
    <property type="entry name" value="TonB_dep_Rec_b-barrel"/>
    <property type="match status" value="1"/>
</dbReference>
<dbReference type="SUPFAM" id="SSF56935">
    <property type="entry name" value="Porins"/>
    <property type="match status" value="1"/>
</dbReference>
<dbReference type="PROSITE" id="PS52016">
    <property type="entry name" value="TONB_DEPENDENT_REC_3"/>
    <property type="match status" value="1"/>
</dbReference>
<proteinExistence type="inferred from homology"/>
<feature type="signal peptide" evidence="2">
    <location>
        <begin position="1"/>
        <end position="23"/>
    </location>
</feature>
<feature type="chain" id="PRO_0000325856" description="Heme transporter BhuA">
    <location>
        <begin position="24"/>
        <end position="661"/>
    </location>
</feature>
<feature type="domain" description="TBDR plug" evidence="3">
    <location>
        <begin position="48"/>
        <end position="159"/>
    </location>
</feature>
<feature type="domain" description="TBDR beta-barrel" evidence="3">
    <location>
        <begin position="170"/>
        <end position="661"/>
    </location>
</feature>
<name>BHUA_BRUAB</name>
<keyword id="KW-0998">Cell outer membrane</keyword>
<keyword id="KW-0472">Membrane</keyword>
<keyword id="KW-0675">Receptor</keyword>
<keyword id="KW-0732">Signal</keyword>
<keyword id="KW-0798">TonB box</keyword>
<keyword id="KW-0812">Transmembrane</keyword>
<keyword id="KW-1134">Transmembrane beta strand</keyword>
<keyword id="KW-0813">Transport</keyword>
<gene>
    <name type="primary">bhuA</name>
    <name type="ordered locus">BruAb2_1126</name>
</gene>
<protein>
    <recommendedName>
        <fullName>Heme transporter BhuA</fullName>
    </recommendedName>
</protein>
<evidence type="ECO:0000250" key="1"/>
<evidence type="ECO:0000255" key="2"/>
<evidence type="ECO:0000255" key="3">
    <source>
        <dbReference type="PROSITE-ProRule" id="PRU01360"/>
    </source>
</evidence>
<evidence type="ECO:0000305" key="4"/>
<comment type="function">
    <text evidence="1">Heme transporter.</text>
</comment>
<comment type="subcellular location">
    <subcellularLocation>
        <location evidence="3">Cell outer membrane</location>
        <topology evidence="3">Multi-pass membrane protein</topology>
    </subcellularLocation>
</comment>
<comment type="induction">
    <text evidence="1">Induced in absence of iron.</text>
</comment>
<comment type="similarity">
    <text evidence="4">Belongs to the TonB-dependent receptor family.</text>
</comment>
<reference key="1">
    <citation type="journal article" date="2005" name="J. Bacteriol.">
        <title>Completion of the genome sequence of Brucella abortus and comparison to the highly similar genomes of Brucella melitensis and Brucella suis.</title>
        <authorList>
            <person name="Halling S.M."/>
            <person name="Peterson-Burch B.D."/>
            <person name="Bricker B.J."/>
            <person name="Zuerner R.L."/>
            <person name="Qing Z."/>
            <person name="Li L.-L."/>
            <person name="Kapur V."/>
            <person name="Alt D.P."/>
            <person name="Olsen S.C."/>
        </authorList>
    </citation>
    <scope>NUCLEOTIDE SEQUENCE [LARGE SCALE GENOMIC DNA]</scope>
    <source>
        <strain>9-941</strain>
    </source>
</reference>
<accession>Q576D7</accession>
<sequence>MKFTRTLVLASTSLLATVATSQAQEVKRDTKKQGEVVLKPITIISHGKDNIEATGGTVLTYKDIEKLQPANVSELFSRQSSIAVSGGGGPSKRIHVLGMEQSNLAVSVDGVPQTATSWHHTGSNVIDPAFLKRVEVEAGAAAADSGFGAAAGAIRYETVNALDLLEPGKTFGARIIGSYGTNGRGFSGSTAAYGLKDGFDWLLMLHGTSGHNYKNGDGTEILGTEPAARNILGKAGYEFDGNRIDIGYERSRDKADRLIKMNMGLPGDTEYPLEVARDSVNIKYTRTDATDMWDPEVQFYYNRNDYWRNDYQNRTNGNMILKEDLYGGKLQNTFTIDYGKITAGIDFGKHDYNTDNYGHNDRRYRKFNTQQVGAFTQGRFEFDNGFSLSTGARYDYSRFADWNDEVFSDSGASVNGTLSYKFNEHIEVFAGASRTWLGYVLGDYGYVHARNNAFYTDPTFSPGRARNYKAGVNFGGADWSAGITLFDTRIAGLPNYDSQKLGNDPEEYRSRGFTLNARYIWNYTTIGATFTKAKVTAGDDPVLPNSGSFMPIGDMATLFIDQEIPDYNMKVGATLAWAGRISDEAATAANFYDQPAYTVVNAYAEWNPPAVKNMTLRVGVENLFNENYYERTSFAPSQNRGGIDAVWAPGRTFTFQTAFKF</sequence>
<organism>
    <name type="scientific">Brucella abortus biovar 1 (strain 9-941)</name>
    <dbReference type="NCBI Taxonomy" id="262698"/>
    <lineage>
        <taxon>Bacteria</taxon>
        <taxon>Pseudomonadati</taxon>
        <taxon>Pseudomonadota</taxon>
        <taxon>Alphaproteobacteria</taxon>
        <taxon>Hyphomicrobiales</taxon>
        <taxon>Brucellaceae</taxon>
        <taxon>Brucella/Ochrobactrum group</taxon>
        <taxon>Brucella</taxon>
    </lineage>
</organism>